<keyword id="KW-0456">Lyase</keyword>
<keyword id="KW-0574">Periplasm</keyword>
<keyword id="KW-0732">Signal</keyword>
<gene>
    <name type="primary">hepC</name>
</gene>
<dbReference type="EC" id="4.2.2.8"/>
<dbReference type="EMBL" id="GQ304755">
    <property type="protein sequence ID" value="ACT66689.1"/>
    <property type="molecule type" value="Genomic_DNA"/>
</dbReference>
<dbReference type="SMR" id="C7EXL6"/>
<dbReference type="STRING" id="46506.AA415_01887"/>
<dbReference type="CAZy" id="PL12">
    <property type="family name" value="Polysaccharide Lyase Family 12"/>
</dbReference>
<dbReference type="BRENDA" id="4.2.2.8">
    <property type="organism ID" value="7145"/>
</dbReference>
<dbReference type="SABIO-RK" id="C7EXL6"/>
<dbReference type="GO" id="GO:0042597">
    <property type="term" value="C:periplasmic space"/>
    <property type="evidence" value="ECO:0007669"/>
    <property type="project" value="UniProtKB-SubCell"/>
</dbReference>
<dbReference type="GO" id="GO:0015021">
    <property type="term" value="F:heparin-sulfate lyase activity"/>
    <property type="evidence" value="ECO:0007669"/>
    <property type="project" value="UniProtKB-EC"/>
</dbReference>
<dbReference type="Gene3D" id="2.70.98.70">
    <property type="match status" value="1"/>
</dbReference>
<dbReference type="Gene3D" id="1.50.10.100">
    <property type="entry name" value="Chondroitin AC/alginate lyase"/>
    <property type="match status" value="1"/>
</dbReference>
<dbReference type="InterPro" id="IPR008929">
    <property type="entry name" value="Chondroitin_lyas"/>
</dbReference>
<dbReference type="InterPro" id="IPR012480">
    <property type="entry name" value="Hepar_II_III_C"/>
</dbReference>
<dbReference type="InterPro" id="IPR031680">
    <property type="entry name" value="Hepar_II_III_N"/>
</dbReference>
<dbReference type="InterPro" id="IPR054646">
    <property type="entry name" value="HepC"/>
</dbReference>
<dbReference type="NCBIfam" id="NF045573">
    <property type="entry name" value="Hepsulflyase_CFB"/>
    <property type="match status" value="1"/>
</dbReference>
<dbReference type="PANTHER" id="PTHR39210">
    <property type="entry name" value="HEPARIN-SULFATE LYASE"/>
    <property type="match status" value="1"/>
</dbReference>
<dbReference type="PANTHER" id="PTHR39210:SF1">
    <property type="entry name" value="HEPARIN-SULFATE LYASE"/>
    <property type="match status" value="1"/>
</dbReference>
<dbReference type="Pfam" id="PF07940">
    <property type="entry name" value="Hepar_II_III_C"/>
    <property type="match status" value="1"/>
</dbReference>
<dbReference type="Pfam" id="PF16889">
    <property type="entry name" value="Hepar_II_III_N"/>
    <property type="match status" value="1"/>
</dbReference>
<dbReference type="SUPFAM" id="SSF48230">
    <property type="entry name" value="Chondroitin AC/alginate lyase"/>
    <property type="match status" value="1"/>
</dbReference>
<name>HEPC_BACSE</name>
<organism>
    <name type="scientific">Bacteroides stercoris</name>
    <dbReference type="NCBI Taxonomy" id="46506"/>
    <lineage>
        <taxon>Bacteria</taxon>
        <taxon>Pseudomonadati</taxon>
        <taxon>Bacteroidota</taxon>
        <taxon>Bacteroidia</taxon>
        <taxon>Bacteroidales</taxon>
        <taxon>Bacteroidaceae</taxon>
        <taxon>Bacteroides</taxon>
    </lineage>
</organism>
<reference key="1">
    <citation type="journal article" date="2010" name="Appl. Microbiol. Biotechnol.">
        <title>Cloning, overexpression, and characterization of recombinant heparinase III from Bacteroides stercoris HJ-15.</title>
        <authorList>
            <person name="Hyun Y.J."/>
            <person name="Lee J.H."/>
            <person name="Kim D.H."/>
        </authorList>
    </citation>
    <scope>NUCLEOTIDE SEQUENCE [GENOMIC DNA]</scope>
    <scope>FUNCTION</scope>
    <scope>CATALYTIC ACTIVITY</scope>
    <scope>BIOPHYSICOCHEMICAL PROPERTIES</scope>
    <scope>MUTAGENESIS OF CYS-352; CYS-474; CYS-577 AND CYS-624</scope>
    <source>
        <strain>HJ-15</strain>
    </source>
</reference>
<sequence>MNKTFKYIVLLALACFVGKANAQELKTEVFSLLNLDYPGLEKVKALHQEGKDADAAKALLDYYRARTNVKTPDINLKKVTIGKDEQKMADEALQHTFFAHKGYQPSFNYGEDIDWRYWPVKDNELRWQLHRHKWFTPMGKAYRVSGDEKYAVEWTKQYIDWIKKNPLVKVDKKEYEMTGDNQLKGDVENARFAWRPLEVSNRLQDQTSQFQLFLPSPSFTPEFLTEFLVNYHKHAIHILGIYSAQGNHLLFEAQRMIYAGAFFPEFKEAAAWRKSGIDIMNREINVQVYNDGGQFELDPHYHLAAINIFCKALNIADLYGFRNEFPQEYLDTIEKMIVFYANVSFPDYTNPCFSDAKLTNKKEMLKNYRNWSKMFPKNQFIKYLATDGKEGALPEYLSKGFLKSGFFVFRNSWGTDATQMVVKAGPKAFWHCQPDNGTFELWFNGKNLFPDSGSYVYAGEGEVMEQRNWHRQTCVHNTVTLNNKNLDQTESVTKLWQPEGNVQILVTENPSYKNLKHRRSVFFVDNSYFVIVDEMVGSQKGSINLHYQMPKGEIANSREDMTFVTQFEEGSNMKLQCFGPEGMTMKKEPGWCSTAYRKRYKRMNVSFNVKKDSEDAVRYITVICPIKNSADAPKLSAKFKNKTFNENGLEVEVKVNGKKQSLNYKL</sequence>
<proteinExistence type="evidence at protein level"/>
<protein>
    <recommendedName>
        <fullName>Heparin-sulfate lyase</fullName>
        <ecNumber>4.2.2.8</ecNumber>
    </recommendedName>
    <alternativeName>
        <fullName>Heparin-sulfate eliminase</fullName>
    </alternativeName>
    <alternativeName>
        <fullName>Heparinase III</fullName>
        <shortName>HepIII</shortName>
    </alternativeName>
    <alternativeName>
        <fullName>Heparitin-sulfate lyase</fullName>
    </alternativeName>
</protein>
<feature type="signal peptide" evidence="2">
    <location>
        <begin position="1"/>
        <end position="22"/>
    </location>
</feature>
<feature type="chain" id="PRO_0000424106" description="Heparin-sulfate lyase">
    <location>
        <begin position="23"/>
        <end position="666"/>
    </location>
</feature>
<feature type="active site" description="Proton acceptor" evidence="2">
    <location>
        <position position="301"/>
    </location>
</feature>
<feature type="mutagenesis site" description="Does not affect much catalytic activity." evidence="3">
    <original>C</original>
    <variation>A</variation>
    <location>
        <position position="352"/>
    </location>
</feature>
<feature type="mutagenesis site" description="Impaired catalytic activity." evidence="3">
    <original>C</original>
    <variation>A</variation>
    <location>
        <position position="474"/>
    </location>
</feature>
<feature type="mutagenesis site" description="Does not affect much catalytic activity." evidence="3">
    <original>C</original>
    <variation>A</variation>
    <location>
        <position position="577"/>
    </location>
</feature>
<feature type="mutagenesis site" description="Impaired catalytic activity." evidence="3">
    <original>C</original>
    <variation>A</variation>
    <location>
        <position position="624"/>
    </location>
</feature>
<accession>C7EXL6</accession>
<comment type="function">
    <text evidence="3">Specifically cleaves heparan sulfate-rich regions of acidic polysaccharides. Also able to degrade heparin and hyaluronic acid. Does not act on N,O-desulfated glucosamine or N-acetyl-O-sulfated glucosamine linkages. Functions in cleaving metazoan heparan sulfate and providing carbon, nitrogen and sulfate sources for microorganisms.</text>
</comment>
<comment type="catalytic activity">
    <reaction evidence="3">
        <text>Elimination of sulfate, appears to act on linkages between N-acetyl-D-glucosamine and uronate. Product is an unsaturated sugar.</text>
        <dbReference type="EC" id="4.2.2.8"/>
    </reaction>
</comment>
<comment type="biophysicochemical properties">
    <kinetics>
        <KM evidence="3">422.75 uM for heparin</KM>
        <KM evidence="3">88.08 uM for heparan sulfate</KM>
        <Vmax evidence="3">21.46 umol/min/mg enzyme with heparin as substrate</Vmax>
        <Vmax evidence="3">51.81 umol/min/mg enzyme with heparan sulfate as substrate</Vmax>
    </kinetics>
</comment>
<comment type="subcellular location">
    <subcellularLocation>
        <location evidence="1">Periplasm</location>
    </subcellularLocation>
</comment>
<comment type="similarity">
    <text evidence="4">Belongs to the polysaccharide lyase 12 family.</text>
</comment>
<evidence type="ECO:0000250" key="1"/>
<evidence type="ECO:0000255" key="2"/>
<evidence type="ECO:0000269" key="3">
    <source>
    </source>
</evidence>
<evidence type="ECO:0000305" key="4"/>